<keyword id="KW-0315">Glutamine amidotransferase</keyword>
<keyword id="KW-0378">Hydrolase</keyword>
<keyword id="KW-0456">Lyase</keyword>
<keyword id="KW-0663">Pyridoxal phosphate</keyword>
<evidence type="ECO:0000255" key="1">
    <source>
        <dbReference type="HAMAP-Rule" id="MF_01615"/>
    </source>
</evidence>
<gene>
    <name evidence="1" type="primary">pdxT</name>
    <name type="ordered locus">USA300HOU_0512</name>
</gene>
<proteinExistence type="inferred from homology"/>
<reference key="1">
    <citation type="journal article" date="2007" name="BMC Microbiol.">
        <title>Subtle genetic changes enhance virulence of methicillin resistant and sensitive Staphylococcus aureus.</title>
        <authorList>
            <person name="Highlander S.K."/>
            <person name="Hulten K.G."/>
            <person name="Qin X."/>
            <person name="Jiang H."/>
            <person name="Yerrapragada S."/>
            <person name="Mason E.O. Jr."/>
            <person name="Shang Y."/>
            <person name="Williams T.M."/>
            <person name="Fortunov R.M."/>
            <person name="Liu Y."/>
            <person name="Igboeli O."/>
            <person name="Petrosino J."/>
            <person name="Tirumalai M."/>
            <person name="Uzman A."/>
            <person name="Fox G.E."/>
            <person name="Cardenas A.M."/>
            <person name="Muzny D.M."/>
            <person name="Hemphill L."/>
            <person name="Ding Y."/>
            <person name="Dugan S."/>
            <person name="Blyth P.R."/>
            <person name="Buhay C.J."/>
            <person name="Dinh H.H."/>
            <person name="Hawes A.C."/>
            <person name="Holder M."/>
            <person name="Kovar C.L."/>
            <person name="Lee S.L."/>
            <person name="Liu W."/>
            <person name="Nazareth L.V."/>
            <person name="Wang Q."/>
            <person name="Zhou J."/>
            <person name="Kaplan S.L."/>
            <person name="Weinstock G.M."/>
        </authorList>
    </citation>
    <scope>NUCLEOTIDE SEQUENCE [LARGE SCALE GENOMIC DNA]</scope>
    <source>
        <strain>USA300 / TCH1516</strain>
    </source>
</reference>
<dbReference type="EC" id="4.3.3.6" evidence="1"/>
<dbReference type="EC" id="3.5.1.2" evidence="1"/>
<dbReference type="EMBL" id="CP000730">
    <property type="protein sequence ID" value="ABX28538.1"/>
    <property type="molecule type" value="Genomic_DNA"/>
</dbReference>
<dbReference type="RefSeq" id="WP_000690439.1">
    <property type="nucleotide sequence ID" value="NC_010079.1"/>
</dbReference>
<dbReference type="SMR" id="A8YZL6"/>
<dbReference type="MEROPS" id="C26.A32"/>
<dbReference type="KEGG" id="sax:USA300HOU_0512"/>
<dbReference type="HOGENOM" id="CLU_069674_2_0_9"/>
<dbReference type="UniPathway" id="UPA00245"/>
<dbReference type="GO" id="GO:0005829">
    <property type="term" value="C:cytosol"/>
    <property type="evidence" value="ECO:0007669"/>
    <property type="project" value="TreeGrafter"/>
</dbReference>
<dbReference type="GO" id="GO:1903600">
    <property type="term" value="C:glutaminase complex"/>
    <property type="evidence" value="ECO:0007669"/>
    <property type="project" value="TreeGrafter"/>
</dbReference>
<dbReference type="GO" id="GO:0004359">
    <property type="term" value="F:glutaminase activity"/>
    <property type="evidence" value="ECO:0007669"/>
    <property type="project" value="UniProtKB-UniRule"/>
</dbReference>
<dbReference type="GO" id="GO:0036381">
    <property type="term" value="F:pyridoxal 5'-phosphate synthase (glutamine hydrolysing) activity"/>
    <property type="evidence" value="ECO:0007669"/>
    <property type="project" value="UniProtKB-UniRule"/>
</dbReference>
<dbReference type="GO" id="GO:0006543">
    <property type="term" value="P:glutamine catabolic process"/>
    <property type="evidence" value="ECO:0007669"/>
    <property type="project" value="UniProtKB-UniRule"/>
</dbReference>
<dbReference type="GO" id="GO:0042823">
    <property type="term" value="P:pyridoxal phosphate biosynthetic process"/>
    <property type="evidence" value="ECO:0007669"/>
    <property type="project" value="UniProtKB-UniRule"/>
</dbReference>
<dbReference type="GO" id="GO:0008614">
    <property type="term" value="P:pyridoxine metabolic process"/>
    <property type="evidence" value="ECO:0007669"/>
    <property type="project" value="TreeGrafter"/>
</dbReference>
<dbReference type="CDD" id="cd01749">
    <property type="entry name" value="GATase1_PB"/>
    <property type="match status" value="1"/>
</dbReference>
<dbReference type="FunFam" id="3.40.50.880:FF:000010">
    <property type="entry name" value="uncharacterized protein LOC100176842 isoform X2"/>
    <property type="match status" value="1"/>
</dbReference>
<dbReference type="Gene3D" id="3.40.50.880">
    <property type="match status" value="1"/>
</dbReference>
<dbReference type="HAMAP" id="MF_01615">
    <property type="entry name" value="PdxT"/>
    <property type="match status" value="1"/>
</dbReference>
<dbReference type="InterPro" id="IPR029062">
    <property type="entry name" value="Class_I_gatase-like"/>
</dbReference>
<dbReference type="InterPro" id="IPR002161">
    <property type="entry name" value="PdxT/SNO"/>
</dbReference>
<dbReference type="InterPro" id="IPR021196">
    <property type="entry name" value="PdxT/SNO_CS"/>
</dbReference>
<dbReference type="NCBIfam" id="TIGR03800">
    <property type="entry name" value="PLP_synth_Pdx2"/>
    <property type="match status" value="1"/>
</dbReference>
<dbReference type="PANTHER" id="PTHR31559">
    <property type="entry name" value="PYRIDOXAL 5'-PHOSPHATE SYNTHASE SUBUNIT SNO"/>
    <property type="match status" value="1"/>
</dbReference>
<dbReference type="PANTHER" id="PTHR31559:SF0">
    <property type="entry name" value="PYRIDOXAL 5'-PHOSPHATE SYNTHASE SUBUNIT SNO1-RELATED"/>
    <property type="match status" value="1"/>
</dbReference>
<dbReference type="Pfam" id="PF01174">
    <property type="entry name" value="SNO"/>
    <property type="match status" value="1"/>
</dbReference>
<dbReference type="PIRSF" id="PIRSF005639">
    <property type="entry name" value="Glut_amidoT_SNO"/>
    <property type="match status" value="1"/>
</dbReference>
<dbReference type="SUPFAM" id="SSF52317">
    <property type="entry name" value="Class I glutamine amidotransferase-like"/>
    <property type="match status" value="1"/>
</dbReference>
<dbReference type="PROSITE" id="PS01236">
    <property type="entry name" value="PDXT_SNO_1"/>
    <property type="match status" value="1"/>
</dbReference>
<dbReference type="PROSITE" id="PS51130">
    <property type="entry name" value="PDXT_SNO_2"/>
    <property type="match status" value="1"/>
</dbReference>
<organism>
    <name type="scientific">Staphylococcus aureus (strain USA300 / TCH1516)</name>
    <dbReference type="NCBI Taxonomy" id="451516"/>
    <lineage>
        <taxon>Bacteria</taxon>
        <taxon>Bacillati</taxon>
        <taxon>Bacillota</taxon>
        <taxon>Bacilli</taxon>
        <taxon>Bacillales</taxon>
        <taxon>Staphylococcaceae</taxon>
        <taxon>Staphylococcus</taxon>
    </lineage>
</organism>
<protein>
    <recommendedName>
        <fullName evidence="1">Pyridoxal 5'-phosphate synthase subunit PdxT</fullName>
        <ecNumber evidence="1">4.3.3.6</ecNumber>
    </recommendedName>
    <alternativeName>
        <fullName evidence="1">Pdx2</fullName>
    </alternativeName>
    <alternativeName>
        <fullName evidence="1">Pyridoxal 5'-phosphate synthase glutaminase subunit</fullName>
        <ecNumber evidence="1">3.5.1.2</ecNumber>
    </alternativeName>
</protein>
<name>PDXT_STAAT</name>
<comment type="function">
    <text evidence="1">Catalyzes the hydrolysis of glutamine to glutamate and ammonia as part of the biosynthesis of pyridoxal 5'-phosphate. The resulting ammonia molecule is channeled to the active site of PdxS.</text>
</comment>
<comment type="catalytic activity">
    <reaction evidence="1">
        <text>aldehydo-D-ribose 5-phosphate + D-glyceraldehyde 3-phosphate + L-glutamine = pyridoxal 5'-phosphate + L-glutamate + phosphate + 3 H2O + H(+)</text>
        <dbReference type="Rhea" id="RHEA:31507"/>
        <dbReference type="ChEBI" id="CHEBI:15377"/>
        <dbReference type="ChEBI" id="CHEBI:15378"/>
        <dbReference type="ChEBI" id="CHEBI:29985"/>
        <dbReference type="ChEBI" id="CHEBI:43474"/>
        <dbReference type="ChEBI" id="CHEBI:58273"/>
        <dbReference type="ChEBI" id="CHEBI:58359"/>
        <dbReference type="ChEBI" id="CHEBI:59776"/>
        <dbReference type="ChEBI" id="CHEBI:597326"/>
        <dbReference type="EC" id="4.3.3.6"/>
    </reaction>
</comment>
<comment type="catalytic activity">
    <reaction evidence="1">
        <text>L-glutamine + H2O = L-glutamate + NH4(+)</text>
        <dbReference type="Rhea" id="RHEA:15889"/>
        <dbReference type="ChEBI" id="CHEBI:15377"/>
        <dbReference type="ChEBI" id="CHEBI:28938"/>
        <dbReference type="ChEBI" id="CHEBI:29985"/>
        <dbReference type="ChEBI" id="CHEBI:58359"/>
        <dbReference type="EC" id="3.5.1.2"/>
    </reaction>
</comment>
<comment type="pathway">
    <text evidence="1">Cofactor biosynthesis; pyridoxal 5'-phosphate biosynthesis.</text>
</comment>
<comment type="subunit">
    <text evidence="1">In the presence of PdxS, forms a dodecamer of heterodimers. Only shows activity in the heterodimer.</text>
</comment>
<comment type="similarity">
    <text evidence="1">Belongs to the glutaminase PdxT/SNO family.</text>
</comment>
<accession>A8YZL6</accession>
<sequence>MKIGVLALQGAVREHIRHIELSGHEGIAVKKVEQLEEIEGLILPGGESTTLRRLMNLYGFKEALQNSTLPMFGTCAGLIVLAQDIVGEEGYLNKLNITVQRNSFGRQVDSFETELDIKGIATDIEGVFIRAPHIEKVGQGVDILCKVNEKIVAVQQGKYLGVSFHPELTDDYRVTDYFINHIVKKA</sequence>
<feature type="chain" id="PRO_1000088059" description="Pyridoxal 5'-phosphate synthase subunit PdxT">
    <location>
        <begin position="1"/>
        <end position="186"/>
    </location>
</feature>
<feature type="active site" description="Nucleophile" evidence="1">
    <location>
        <position position="75"/>
    </location>
</feature>
<feature type="active site" description="Charge relay system" evidence="1">
    <location>
        <position position="165"/>
    </location>
</feature>
<feature type="active site" description="Charge relay system" evidence="1">
    <location>
        <position position="167"/>
    </location>
</feature>
<feature type="binding site" evidence="1">
    <location>
        <begin position="46"/>
        <end position="48"/>
    </location>
    <ligand>
        <name>L-glutamine</name>
        <dbReference type="ChEBI" id="CHEBI:58359"/>
    </ligand>
</feature>
<feature type="binding site" evidence="1">
    <location>
        <position position="101"/>
    </location>
    <ligand>
        <name>L-glutamine</name>
        <dbReference type="ChEBI" id="CHEBI:58359"/>
    </ligand>
</feature>
<feature type="binding site" evidence="1">
    <location>
        <begin position="129"/>
        <end position="130"/>
    </location>
    <ligand>
        <name>L-glutamine</name>
        <dbReference type="ChEBI" id="CHEBI:58359"/>
    </ligand>
</feature>